<dbReference type="EMBL" id="AB169493">
    <property type="protein sequence ID" value="BAE01575.1"/>
    <property type="molecule type" value="mRNA"/>
</dbReference>
<dbReference type="SMR" id="Q4R5Q0"/>
<dbReference type="STRING" id="9541.ENSMFAP00000016536"/>
<dbReference type="eggNOG" id="KOG0746">
    <property type="taxonomic scope" value="Eukaryota"/>
</dbReference>
<dbReference type="Proteomes" id="UP000233100">
    <property type="component" value="Unplaced"/>
</dbReference>
<dbReference type="GO" id="GO:0022625">
    <property type="term" value="C:cytosolic large ribosomal subunit"/>
    <property type="evidence" value="ECO:0007669"/>
    <property type="project" value="TreeGrafter"/>
</dbReference>
<dbReference type="GO" id="GO:0005730">
    <property type="term" value="C:nucleolus"/>
    <property type="evidence" value="ECO:0000250"/>
    <property type="project" value="UniProtKB"/>
</dbReference>
<dbReference type="GO" id="GO:0003723">
    <property type="term" value="F:RNA binding"/>
    <property type="evidence" value="ECO:0007669"/>
    <property type="project" value="TreeGrafter"/>
</dbReference>
<dbReference type="GO" id="GO:0003735">
    <property type="term" value="F:structural constituent of ribosome"/>
    <property type="evidence" value="ECO:0007669"/>
    <property type="project" value="InterPro"/>
</dbReference>
<dbReference type="GO" id="GO:0006412">
    <property type="term" value="P:translation"/>
    <property type="evidence" value="ECO:0007669"/>
    <property type="project" value="InterPro"/>
</dbReference>
<dbReference type="FunFam" id="2.40.30.10:FF:000079">
    <property type="entry name" value="60S ribosomal protein L3"/>
    <property type="match status" value="1"/>
</dbReference>
<dbReference type="FunFam" id="3.30.1430.10:FF:000001">
    <property type="entry name" value="60S ribosomal protein L3"/>
    <property type="match status" value="1"/>
</dbReference>
<dbReference type="FunFam" id="4.10.960.10:FF:000002">
    <property type="entry name" value="60S ribosomal protein L3"/>
    <property type="match status" value="1"/>
</dbReference>
<dbReference type="FunFam" id="4.10.960.10:FF:000004">
    <property type="entry name" value="60S ribosomal protein L3"/>
    <property type="match status" value="1"/>
</dbReference>
<dbReference type="FunFam" id="2.40.30.10:FF:000351">
    <property type="entry name" value="Ribosomal protein L3"/>
    <property type="match status" value="1"/>
</dbReference>
<dbReference type="Gene3D" id="3.30.1430.10">
    <property type="match status" value="1"/>
</dbReference>
<dbReference type="Gene3D" id="4.10.960.10">
    <property type="entry name" value="Ribosomal protein L3, domain 3"/>
    <property type="match status" value="1"/>
</dbReference>
<dbReference type="Gene3D" id="2.40.30.10">
    <property type="entry name" value="Translation factors"/>
    <property type="match status" value="1"/>
</dbReference>
<dbReference type="InterPro" id="IPR045077">
    <property type="entry name" value="L3_arc_euk"/>
</dbReference>
<dbReference type="InterPro" id="IPR044892">
    <property type="entry name" value="Ribosomal_L3_dom_3_arc_sf"/>
</dbReference>
<dbReference type="InterPro" id="IPR000597">
    <property type="entry name" value="Ribosomal_uL3"/>
</dbReference>
<dbReference type="InterPro" id="IPR019926">
    <property type="entry name" value="Ribosomal_uL3_CS"/>
</dbReference>
<dbReference type="InterPro" id="IPR009000">
    <property type="entry name" value="Transl_B-barrel_sf"/>
</dbReference>
<dbReference type="PANTHER" id="PTHR11363">
    <property type="entry name" value="60S RIBOSOMAL PROTEIN L3-RELATED"/>
    <property type="match status" value="1"/>
</dbReference>
<dbReference type="PANTHER" id="PTHR11363:SF4">
    <property type="entry name" value="LARGE RIBOSOMAL SUBUNIT PROTEIN UL3"/>
    <property type="match status" value="1"/>
</dbReference>
<dbReference type="Pfam" id="PF00297">
    <property type="entry name" value="Ribosomal_L3"/>
    <property type="match status" value="1"/>
</dbReference>
<dbReference type="SUPFAM" id="SSF50447">
    <property type="entry name" value="Translation proteins"/>
    <property type="match status" value="1"/>
</dbReference>
<dbReference type="PROSITE" id="PS00474">
    <property type="entry name" value="RIBOSOMAL_L3"/>
    <property type="match status" value="1"/>
</dbReference>
<name>RL3_MACFA</name>
<gene>
    <name type="primary">RPL3</name>
    <name type="ORF">QccE-11024</name>
</gene>
<organism>
    <name type="scientific">Macaca fascicularis</name>
    <name type="common">Crab-eating macaque</name>
    <name type="synonym">Cynomolgus monkey</name>
    <dbReference type="NCBI Taxonomy" id="9541"/>
    <lineage>
        <taxon>Eukaryota</taxon>
        <taxon>Metazoa</taxon>
        <taxon>Chordata</taxon>
        <taxon>Craniata</taxon>
        <taxon>Vertebrata</taxon>
        <taxon>Euteleostomi</taxon>
        <taxon>Mammalia</taxon>
        <taxon>Eutheria</taxon>
        <taxon>Euarchontoglires</taxon>
        <taxon>Primates</taxon>
        <taxon>Haplorrhini</taxon>
        <taxon>Catarrhini</taxon>
        <taxon>Cercopithecidae</taxon>
        <taxon>Cercopithecinae</taxon>
        <taxon>Macaca</taxon>
    </lineage>
</organism>
<proteinExistence type="evidence at transcript level"/>
<feature type="chain" id="PRO_0000077228" description="Large ribosomal subunit protein uL3">
    <location>
        <begin position="1"/>
        <end position="403"/>
    </location>
</feature>
<feature type="region of interest" description="Disordered" evidence="3">
    <location>
        <begin position="1"/>
        <end position="37"/>
    </location>
</feature>
<feature type="compositionally biased region" description="Basic residues" evidence="3">
    <location>
        <begin position="18"/>
        <end position="31"/>
    </location>
</feature>
<feature type="modified residue" description="Phosphoserine" evidence="2">
    <location>
        <position position="13"/>
    </location>
</feature>
<feature type="modified residue" description="N6-acetyllysine" evidence="1">
    <location>
        <position position="136"/>
    </location>
</feature>
<feature type="modified residue" description="Tele-methylhistidine" evidence="2">
    <location>
        <position position="245"/>
    </location>
</feature>
<feature type="modified residue" description="N6-acetyllysine; alternate" evidence="1">
    <location>
        <position position="286"/>
    </location>
</feature>
<feature type="modified residue" description="N6-acetyllysine; alternate" evidence="2">
    <location>
        <position position="294"/>
    </location>
</feature>
<feature type="modified residue" description="Phosphoserine" evidence="2">
    <location>
        <position position="304"/>
    </location>
</feature>
<feature type="modified residue" description="N6-acetyllysine; alternate" evidence="2">
    <location>
        <position position="366"/>
    </location>
</feature>
<feature type="modified residue" description="N6-acetyllysine" evidence="1">
    <location>
        <position position="373"/>
    </location>
</feature>
<feature type="cross-link" description="Glycyl lysine isopeptide (Lys-Gly) (interchain with G-Cter in SUMO2)" evidence="2">
    <location>
        <position position="39"/>
    </location>
</feature>
<feature type="cross-link" description="Glycyl lysine isopeptide (Lys-Gly) (interchain with G-Cter in SUMO2)" evidence="2">
    <location>
        <position position="224"/>
    </location>
</feature>
<feature type="cross-link" description="Glycyl lysine isopeptide (Lys-Gly) (interchain with G-Cter in SUMO2)" evidence="2">
    <location>
        <position position="226"/>
    </location>
</feature>
<feature type="cross-link" description="Glycyl lysine isopeptide (Lys-Gly) (interchain with G-Cter in SUMO2); alternate" evidence="2">
    <location>
        <position position="286"/>
    </location>
</feature>
<feature type="cross-link" description="Glycyl lysine isopeptide (Lys-Gly) (interchain with G-Cter in SUMO1); alternate" evidence="2">
    <location>
        <position position="294"/>
    </location>
</feature>
<feature type="cross-link" description="Glycyl lysine isopeptide (Lys-Gly) (interchain with G-Cter in SUMO2); alternate" evidence="2">
    <location>
        <position position="366"/>
    </location>
</feature>
<feature type="cross-link" description="Glycyl lysine isopeptide (Lys-Gly) (interchain with G-Cter in SUMO2)" evidence="2">
    <location>
        <position position="386"/>
    </location>
</feature>
<feature type="cross-link" description="Glycyl lysine isopeptide (Lys-Gly) (interchain with G-Cter in SUMO2)" evidence="2">
    <location>
        <position position="393"/>
    </location>
</feature>
<feature type="cross-link" description="Glycyl lysine isopeptide (Lys-Gly) (interchain with G-Cter in SUMO2)" evidence="2">
    <location>
        <position position="399"/>
    </location>
</feature>
<protein>
    <recommendedName>
        <fullName evidence="4">Large ribosomal subunit protein uL3</fullName>
    </recommendedName>
    <alternativeName>
        <fullName>60S ribosomal protein L3</fullName>
    </alternativeName>
</protein>
<sequence length="403" mass="46049">MSHRKFSAPRHGSLGFLPRKRSSRHRGKVKSFPKDDPSKPVHLTAFLGYKAGMTHIVREVDRPGSKVNKKEVVVAVTIVETPPMVVVGIVGYVETPRGLRTFKTVFAEHISDECKRRFYKNWHKSKKKAFTKYCKKWQDEDGKKQLEKDFSSMKKYCQVIRVIAHTQMRLLPLRQKKAHLMEIQVNGGTVAEKLDWARERLEQQVPVNQVFGQDEMIDVIGVTKGKGYKGVTSRWHTKKLPRKTHRGLRKVACIGARHPARVAFSVARAGQKGYHHRTEINKKIYKIGQGYLIKDGKLIKNNASTDYDLSDKSINPLGGFVHYGEVTNDFVMLKGCVVGTKKRVLTLRKSLLVQTKRRALEKIDLKFIDTTSKFGHGRFQTMEEKKAFMGPLKKDRIAKEEGA</sequence>
<keyword id="KW-0007">Acetylation</keyword>
<keyword id="KW-0963">Cytoplasm</keyword>
<keyword id="KW-1017">Isopeptide bond</keyword>
<keyword id="KW-0488">Methylation</keyword>
<keyword id="KW-0539">Nucleus</keyword>
<keyword id="KW-0597">Phosphoprotein</keyword>
<keyword id="KW-1185">Reference proteome</keyword>
<keyword id="KW-0687">Ribonucleoprotein</keyword>
<keyword id="KW-0689">Ribosomal protein</keyword>
<keyword id="KW-0832">Ubl conjugation</keyword>
<accession>Q4R5Q0</accession>
<comment type="function">
    <text evidence="2">Component of the large ribosomal subunit. The ribosome is a large ribonucleoprotein complex responsible for the synthesis of proteins in the cell.</text>
</comment>
<comment type="subunit">
    <text evidence="2">Component of the large ribosomal subunit. Interacts with DHX33.</text>
</comment>
<comment type="subcellular location">
    <subcellularLocation>
        <location evidence="2">Nucleus</location>
        <location evidence="2">Nucleolus</location>
    </subcellularLocation>
    <subcellularLocation>
        <location evidence="2">Cytoplasm</location>
    </subcellularLocation>
</comment>
<comment type="PTM">
    <text evidence="2">Constitutively monomethylated at His-245 by METTL18. Methylation at His-245 regulates translation elongation by slowing ribosome traversal on tyrosine codons: slower elongation provides enough time for proper folding of synthesized proteins and prevents cellular aggregation of tyrosine-rich proteins It is not required for incorporation of RPL3 into ribosomes.</text>
</comment>
<comment type="similarity">
    <text evidence="4">Belongs to the universal ribosomal protein uL3 family.</text>
</comment>
<reference key="1">
    <citation type="submission" date="2005-06" db="EMBL/GenBank/DDBJ databases">
        <title>DNA sequences of macaque genes expressed in brain or testis and its evolutionary implications.</title>
        <authorList>
            <consortium name="International consortium for macaque cDNA sequencing and analysis"/>
        </authorList>
    </citation>
    <scope>NUCLEOTIDE SEQUENCE [LARGE SCALE MRNA]</scope>
    <source>
        <tissue>Brain cortex</tissue>
    </source>
</reference>
<evidence type="ECO:0000250" key="1">
    <source>
        <dbReference type="UniProtKB" id="P27659"/>
    </source>
</evidence>
<evidence type="ECO:0000250" key="2">
    <source>
        <dbReference type="UniProtKB" id="P39023"/>
    </source>
</evidence>
<evidence type="ECO:0000256" key="3">
    <source>
        <dbReference type="SAM" id="MobiDB-lite"/>
    </source>
</evidence>
<evidence type="ECO:0000305" key="4"/>